<keyword id="KW-0025">Alternative splicing</keyword>
<keyword id="KW-0067">ATP-binding</keyword>
<keyword id="KW-0115">cAMP biosynthesis</keyword>
<keyword id="KW-1003">Cell membrane</keyword>
<keyword id="KW-0966">Cell projection</keyword>
<keyword id="KW-0969">Cilium</keyword>
<keyword id="KW-0175">Coiled coil</keyword>
<keyword id="KW-0325">Glycoprotein</keyword>
<keyword id="KW-0456">Lyase</keyword>
<keyword id="KW-0460">Magnesium</keyword>
<keyword id="KW-0472">Membrane</keyword>
<keyword id="KW-0479">Metal-binding</keyword>
<keyword id="KW-0488">Methylation</keyword>
<keyword id="KW-0547">Nucleotide-binding</keyword>
<keyword id="KW-0597">Phosphoprotein</keyword>
<keyword id="KW-1185">Reference proteome</keyword>
<keyword id="KW-0677">Repeat</keyword>
<keyword id="KW-0812">Transmembrane</keyword>
<keyword id="KW-1133">Transmembrane helix</keyword>
<proteinExistence type="evidence at protein level"/>
<feature type="chain" id="PRO_0000195695" description="Adenylate cyclase type 5">
    <location>
        <begin position="1"/>
        <end position="1262"/>
    </location>
</feature>
<feature type="topological domain" description="Cytoplasmic" evidence="7">
    <location>
        <begin position="1"/>
        <end position="196"/>
    </location>
</feature>
<feature type="transmembrane region" description="Helical" evidence="7">
    <location>
        <begin position="197"/>
        <end position="217"/>
    </location>
</feature>
<feature type="transmembrane region" description="Helical" evidence="7">
    <location>
        <begin position="243"/>
        <end position="263"/>
    </location>
</feature>
<feature type="transmembrane region" description="Helical" evidence="7">
    <location>
        <begin position="269"/>
        <end position="289"/>
    </location>
</feature>
<feature type="transmembrane region" description="Helical" evidence="7">
    <location>
        <begin position="300"/>
        <end position="320"/>
    </location>
</feature>
<feature type="transmembrane region" description="Helical" evidence="7">
    <location>
        <begin position="326"/>
        <end position="346"/>
    </location>
</feature>
<feature type="transmembrane region" description="Helical" evidence="7">
    <location>
        <begin position="375"/>
        <end position="395"/>
    </location>
</feature>
<feature type="topological domain" description="Cytoplasmic" evidence="7">
    <location>
        <begin position="396"/>
        <end position="763"/>
    </location>
</feature>
<feature type="transmembrane region" description="Helical" evidence="7">
    <location>
        <begin position="764"/>
        <end position="784"/>
    </location>
</feature>
<feature type="transmembrane region" description="Helical" evidence="7">
    <location>
        <begin position="790"/>
        <end position="810"/>
    </location>
</feature>
<feature type="transmembrane region" description="Helical" evidence="7">
    <location>
        <begin position="837"/>
        <end position="857"/>
    </location>
</feature>
<feature type="topological domain" description="Extracellular" evidence="7">
    <location>
        <begin position="858"/>
        <end position="910"/>
    </location>
</feature>
<feature type="transmembrane region" description="Helical" evidence="7">
    <location>
        <begin position="911"/>
        <end position="931"/>
    </location>
</feature>
<feature type="transmembrane region" description="Helical" evidence="7">
    <location>
        <begin position="936"/>
        <end position="956"/>
    </location>
</feature>
<feature type="transmembrane region" description="Helical" evidence="7">
    <location>
        <begin position="985"/>
        <end position="1005"/>
    </location>
</feature>
<feature type="topological domain" description="Cytoplasmic" evidence="7">
    <location>
        <begin position="1006"/>
        <end position="1262"/>
    </location>
</feature>
<feature type="domain" description="Guanylate cyclase 1" evidence="8">
    <location>
        <begin position="470"/>
        <end position="597"/>
    </location>
</feature>
<feature type="domain" description="Guanylate cyclase 2" evidence="8">
    <location>
        <begin position="1072"/>
        <end position="1211"/>
    </location>
</feature>
<feature type="region of interest" description="Disordered" evidence="9">
    <location>
        <begin position="1"/>
        <end position="194"/>
    </location>
</feature>
<feature type="coiled-coil region" evidence="7">
    <location>
        <begin position="1019"/>
        <end position="1045"/>
    </location>
</feature>
<feature type="compositionally biased region" description="Basic and acidic residues" evidence="9">
    <location>
        <begin position="25"/>
        <end position="37"/>
    </location>
</feature>
<feature type="compositionally biased region" description="Low complexity" evidence="9">
    <location>
        <begin position="47"/>
        <end position="59"/>
    </location>
</feature>
<feature type="compositionally biased region" description="Low complexity" evidence="9">
    <location>
        <begin position="129"/>
        <end position="150"/>
    </location>
</feature>
<feature type="compositionally biased region" description="Basic and acidic residues" evidence="9">
    <location>
        <begin position="152"/>
        <end position="172"/>
    </location>
</feature>
<feature type="binding site" evidence="5">
    <location>
        <begin position="475"/>
        <end position="480"/>
    </location>
    <ligand>
        <name>ATP</name>
        <dbReference type="ChEBI" id="CHEBI:30616"/>
    </ligand>
</feature>
<feature type="binding site" evidence="8">
    <location>
        <position position="475"/>
    </location>
    <ligand>
        <name>Mg(2+)</name>
        <dbReference type="ChEBI" id="CHEBI:18420"/>
        <label>1</label>
        <note>catalytic</note>
    </ligand>
</feature>
<feature type="binding site" evidence="8">
    <location>
        <position position="475"/>
    </location>
    <ligand>
        <name>Mg(2+)</name>
        <dbReference type="ChEBI" id="CHEBI:18420"/>
        <label>2</label>
        <note>catalytic</note>
    </ligand>
</feature>
<feature type="binding site" evidence="8">
    <location>
        <position position="476"/>
    </location>
    <ligand>
        <name>Mg(2+)</name>
        <dbReference type="ChEBI" id="CHEBI:18420"/>
        <label>2</label>
        <note>catalytic</note>
    </ligand>
</feature>
<feature type="binding site" evidence="5">
    <location>
        <begin position="517"/>
        <end position="519"/>
    </location>
    <ligand>
        <name>ATP</name>
        <dbReference type="ChEBI" id="CHEBI:30616"/>
    </ligand>
</feature>
<feature type="binding site" evidence="8">
    <location>
        <position position="519"/>
    </location>
    <ligand>
        <name>Mg(2+)</name>
        <dbReference type="ChEBI" id="CHEBI:18420"/>
        <label>1</label>
        <note>catalytic</note>
    </ligand>
</feature>
<feature type="binding site" evidence="8">
    <location>
        <position position="519"/>
    </location>
    <ligand>
        <name>Mg(2+)</name>
        <dbReference type="ChEBI" id="CHEBI:18420"/>
        <label>2</label>
        <note>catalytic</note>
    </ligand>
</feature>
<feature type="binding site" evidence="5">
    <location>
        <position position="563"/>
    </location>
    <ligand>
        <name>ATP</name>
        <dbReference type="ChEBI" id="CHEBI:30616"/>
    </ligand>
</feature>
<feature type="binding site" evidence="4">
    <location>
        <position position="1124"/>
    </location>
    <ligand>
        <name>ATP</name>
        <dbReference type="ChEBI" id="CHEBI:30616"/>
    </ligand>
</feature>
<feature type="binding site" evidence="4">
    <location>
        <begin position="1198"/>
        <end position="1200"/>
    </location>
    <ligand>
        <name>ATP</name>
        <dbReference type="ChEBI" id="CHEBI:30616"/>
    </ligand>
</feature>
<feature type="binding site" evidence="4">
    <location>
        <begin position="1205"/>
        <end position="1209"/>
    </location>
    <ligand>
        <name>ATP</name>
        <dbReference type="ChEBI" id="CHEBI:30616"/>
    </ligand>
</feature>
<feature type="binding site" evidence="4">
    <location>
        <position position="1245"/>
    </location>
    <ligand>
        <name>ATP</name>
        <dbReference type="ChEBI" id="CHEBI:30616"/>
    </ligand>
</feature>
<feature type="modified residue" description="Omega-N-methylarginine" evidence="16">
    <location>
        <position position="23"/>
    </location>
</feature>
<feature type="modified residue" description="Phosphoserine" evidence="15">
    <location>
        <position position="97"/>
    </location>
</feature>
<feature type="modified residue" description="Phosphoserine" evidence="15">
    <location>
        <position position="156"/>
    </location>
</feature>
<feature type="modified residue" description="Phosphoserine" evidence="2">
    <location>
        <position position="667"/>
    </location>
</feature>
<feature type="modified residue" description="Phosphoserine" evidence="6">
    <location>
        <position position="755"/>
    </location>
</feature>
<feature type="modified residue" description="Phosphothreonine" evidence="6">
    <location>
        <position position="1012"/>
    </location>
</feature>
<feature type="glycosylation site" description="N-linked (GlcNAc...) asparagine" evidence="7">
    <location>
        <position position="239"/>
    </location>
</feature>
<feature type="glycosylation site" description="N-linked (GlcNAc...) asparagine" evidence="7">
    <location>
        <position position="834"/>
    </location>
</feature>
<feature type="glycosylation site" description="N-linked (GlcNAc...) asparagine" evidence="7">
    <location>
        <position position="871"/>
    </location>
</feature>
<feature type="glycosylation site" description="N-linked (GlcNAc...) asparagine" evidence="7">
    <location>
        <position position="888"/>
    </location>
</feature>
<feature type="glycosylation site" description="N-linked (GlcNAc...) asparagine" evidence="7">
    <location>
        <position position="973"/>
    </location>
</feature>
<feature type="splice variant" id="VSP_022224" description="In isoform 2." evidence="12">
    <original>PPLS</original>
    <variation>LGHDGVVGKLKAGLGVSMELKGLLFHCGEVTPPHNVWGTGTGRRVACAILSPHLHAQRQCPVRETGLLTREARGHQARSSGSEQKKIFIK</variation>
    <location>
        <begin position="1259"/>
        <end position="1262"/>
    </location>
</feature>
<feature type="sequence conflict" description="In Ref. 2; AAH90846." evidence="13" ref="2">
    <original>G</original>
    <variation>S</variation>
    <location>
        <position position="25"/>
    </location>
</feature>
<feature type="sequence conflict" description="In Ref. 1; BAE28048." evidence="13" ref="1">
    <original>G</original>
    <variation>D</variation>
    <location>
        <position position="686"/>
    </location>
</feature>
<feature type="sequence conflict" description="In Ref. 2; AAH90846." evidence="13" ref="2">
    <original>V</original>
    <variation>M</variation>
    <location>
        <position position="924"/>
    </location>
</feature>
<dbReference type="EC" id="4.6.1.1" evidence="3"/>
<dbReference type="EMBL" id="AK147649">
    <property type="protein sequence ID" value="BAE28048.1"/>
    <property type="molecule type" value="mRNA"/>
</dbReference>
<dbReference type="EMBL" id="AK160942">
    <property type="protein sequence ID" value="BAE36104.1"/>
    <property type="molecule type" value="mRNA"/>
</dbReference>
<dbReference type="EMBL" id="BC035550">
    <property type="status" value="NOT_ANNOTATED_CDS"/>
    <property type="molecule type" value="mRNA"/>
</dbReference>
<dbReference type="EMBL" id="BC090846">
    <property type="protein sequence ID" value="AAH90846.1"/>
    <property type="molecule type" value="mRNA"/>
</dbReference>
<dbReference type="CCDS" id="CCDS37322.1">
    <molecule id="P84309-1"/>
</dbReference>
<dbReference type="RefSeq" id="NP_001012783.3">
    <molecule id="P84309-1"/>
    <property type="nucleotide sequence ID" value="NM_001012765.6"/>
</dbReference>
<dbReference type="SMR" id="P84309"/>
<dbReference type="BioGRID" id="230250">
    <property type="interactions" value="2"/>
</dbReference>
<dbReference type="CORUM" id="P84309"/>
<dbReference type="FunCoup" id="P84309">
    <property type="interactions" value="998"/>
</dbReference>
<dbReference type="STRING" id="10090.ENSMUSP00000110563"/>
<dbReference type="GlyCosmos" id="P84309">
    <property type="glycosylation" value="5 sites, No reported glycans"/>
</dbReference>
<dbReference type="GlyGen" id="P84309">
    <property type="glycosylation" value="8 sites, 1 N-linked glycan (1 site), 1 O-linked glycan (1 site)"/>
</dbReference>
<dbReference type="iPTMnet" id="P84309"/>
<dbReference type="PhosphoSitePlus" id="P84309"/>
<dbReference type="SwissPalm" id="P84309"/>
<dbReference type="jPOST" id="P84309"/>
<dbReference type="PaxDb" id="10090-ENSMUSP00000110563"/>
<dbReference type="PeptideAtlas" id="P84309"/>
<dbReference type="ProteomicsDB" id="285762">
    <molecule id="P84309-1"/>
</dbReference>
<dbReference type="ProteomicsDB" id="285763">
    <molecule id="P84309-2"/>
</dbReference>
<dbReference type="Antibodypedia" id="2807">
    <property type="antibodies" value="159 antibodies from 28 providers"/>
</dbReference>
<dbReference type="DNASU" id="224129"/>
<dbReference type="Ensembl" id="ENSMUST00000114913.3">
    <molecule id="P84309-1"/>
    <property type="protein sequence ID" value="ENSMUSP00000110563.2"/>
    <property type="gene ID" value="ENSMUSG00000022840.10"/>
</dbReference>
<dbReference type="GeneID" id="224129"/>
<dbReference type="KEGG" id="mmu:224129"/>
<dbReference type="UCSC" id="uc007zbj.1">
    <molecule id="P84309-1"/>
    <property type="organism name" value="mouse"/>
</dbReference>
<dbReference type="AGR" id="MGI:99673"/>
<dbReference type="CTD" id="111"/>
<dbReference type="MGI" id="MGI:99673">
    <property type="gene designation" value="Adcy5"/>
</dbReference>
<dbReference type="VEuPathDB" id="HostDB:ENSMUSG00000022840"/>
<dbReference type="eggNOG" id="KOG3619">
    <property type="taxonomic scope" value="Eukaryota"/>
</dbReference>
<dbReference type="GeneTree" id="ENSGT00940000158054"/>
<dbReference type="HOGENOM" id="CLU_001072_2_0_1"/>
<dbReference type="InParanoid" id="P84309"/>
<dbReference type="OMA" id="HNSSHWT"/>
<dbReference type="OrthoDB" id="64271at9989"/>
<dbReference type="PhylomeDB" id="P84309"/>
<dbReference type="TreeFam" id="TF313845"/>
<dbReference type="BRENDA" id="4.6.1.1">
    <property type="organism ID" value="3474"/>
</dbReference>
<dbReference type="Reactome" id="R-MMU-163615">
    <property type="pathway name" value="PKA activation"/>
</dbReference>
<dbReference type="Reactome" id="R-MMU-170660">
    <property type="pathway name" value="Adenylate cyclase activating pathway"/>
</dbReference>
<dbReference type="Reactome" id="R-MMU-170670">
    <property type="pathway name" value="Adenylate cyclase inhibitory pathway"/>
</dbReference>
<dbReference type="Reactome" id="R-MMU-400042">
    <property type="pathway name" value="Adrenaline,noradrenaline inhibits insulin secretion"/>
</dbReference>
<dbReference type="Reactome" id="R-MMU-418597">
    <property type="pathway name" value="G alpha (z) signalling events"/>
</dbReference>
<dbReference type="Reactome" id="R-MMU-5610787">
    <property type="pathway name" value="Hedgehog 'off' state"/>
</dbReference>
<dbReference type="BioGRID-ORCS" id="224129">
    <property type="hits" value="3 hits in 76 CRISPR screens"/>
</dbReference>
<dbReference type="CD-CODE" id="CE726F99">
    <property type="entry name" value="Postsynaptic density"/>
</dbReference>
<dbReference type="ChiTaRS" id="Adcy5">
    <property type="organism name" value="mouse"/>
</dbReference>
<dbReference type="PRO" id="PR:P84309"/>
<dbReference type="Proteomes" id="UP000000589">
    <property type="component" value="Chromosome 16"/>
</dbReference>
<dbReference type="RNAct" id="P84309">
    <property type="molecule type" value="protein"/>
</dbReference>
<dbReference type="Bgee" id="ENSMUSG00000022840">
    <property type="expression patterns" value="Expressed in caudate-putamen and 198 other cell types or tissues"/>
</dbReference>
<dbReference type="GO" id="GO:0005929">
    <property type="term" value="C:cilium"/>
    <property type="evidence" value="ECO:0000314"/>
    <property type="project" value="UniProtKB"/>
</dbReference>
<dbReference type="GO" id="GO:0016020">
    <property type="term" value="C:membrane"/>
    <property type="evidence" value="ECO:0000314"/>
    <property type="project" value="MGI"/>
</dbReference>
<dbReference type="GO" id="GO:0005886">
    <property type="term" value="C:plasma membrane"/>
    <property type="evidence" value="ECO:0000314"/>
    <property type="project" value="BHF-UCL"/>
</dbReference>
<dbReference type="GO" id="GO:0004016">
    <property type="term" value="F:adenylate cyclase activity"/>
    <property type="evidence" value="ECO:0000314"/>
    <property type="project" value="MGI"/>
</dbReference>
<dbReference type="GO" id="GO:0008179">
    <property type="term" value="F:adenylate cyclase binding"/>
    <property type="evidence" value="ECO:0000353"/>
    <property type="project" value="BHF-UCL"/>
</dbReference>
<dbReference type="GO" id="GO:0005524">
    <property type="term" value="F:ATP binding"/>
    <property type="evidence" value="ECO:0007669"/>
    <property type="project" value="UniProtKB-KW"/>
</dbReference>
<dbReference type="GO" id="GO:0046872">
    <property type="term" value="F:metal ion binding"/>
    <property type="evidence" value="ECO:0007669"/>
    <property type="project" value="UniProtKB-KW"/>
</dbReference>
<dbReference type="GO" id="GO:0097110">
    <property type="term" value="F:scaffold protein binding"/>
    <property type="evidence" value="ECO:0000353"/>
    <property type="project" value="MGI"/>
</dbReference>
<dbReference type="GO" id="GO:0007191">
    <property type="term" value="P:adenylate cyclase-activating dopamine receptor signaling pathway"/>
    <property type="evidence" value="ECO:0000316"/>
    <property type="project" value="MGI"/>
</dbReference>
<dbReference type="GO" id="GO:0007189">
    <property type="term" value="P:adenylate cyclase-activating G protein-coupled receptor signaling pathway"/>
    <property type="evidence" value="ECO:0000316"/>
    <property type="project" value="MGI"/>
</dbReference>
<dbReference type="GO" id="GO:0007195">
    <property type="term" value="P:adenylate cyclase-inhibiting dopamine receptor signaling pathway"/>
    <property type="evidence" value="ECO:0000316"/>
    <property type="project" value="MGI"/>
</dbReference>
<dbReference type="GO" id="GO:0006171">
    <property type="term" value="P:cAMP biosynthetic process"/>
    <property type="evidence" value="ECO:0000304"/>
    <property type="project" value="MGI"/>
</dbReference>
<dbReference type="GO" id="GO:1904322">
    <property type="term" value="P:cellular response to forskolin"/>
    <property type="evidence" value="ECO:0000250"/>
    <property type="project" value="UniProtKB"/>
</dbReference>
<dbReference type="GO" id="GO:0001973">
    <property type="term" value="P:G protein-coupled adenosine receptor signaling pathway"/>
    <property type="evidence" value="ECO:0000316"/>
    <property type="project" value="MGI"/>
</dbReference>
<dbReference type="GO" id="GO:0035556">
    <property type="term" value="P:intracellular signal transduction"/>
    <property type="evidence" value="ECO:0007669"/>
    <property type="project" value="InterPro"/>
</dbReference>
<dbReference type="GO" id="GO:0007626">
    <property type="term" value="P:locomotory behavior"/>
    <property type="evidence" value="ECO:0000315"/>
    <property type="project" value="MGI"/>
</dbReference>
<dbReference type="GO" id="GO:0050885">
    <property type="term" value="P:neuromuscular process controlling balance"/>
    <property type="evidence" value="ECO:0000315"/>
    <property type="project" value="MGI"/>
</dbReference>
<dbReference type="GO" id="GO:0007204">
    <property type="term" value="P:positive regulation of cytosolic calcium ion concentration"/>
    <property type="evidence" value="ECO:0000250"/>
    <property type="project" value="UniProtKB"/>
</dbReference>
<dbReference type="GO" id="GO:0061178">
    <property type="term" value="P:regulation of insulin secretion involved in cellular response to glucose stimulus"/>
    <property type="evidence" value="ECO:0000250"/>
    <property type="project" value="UniProtKB"/>
</dbReference>
<dbReference type="CDD" id="cd07302">
    <property type="entry name" value="CHD"/>
    <property type="match status" value="1"/>
</dbReference>
<dbReference type="CDD" id="cd07556">
    <property type="entry name" value="Nucleotidyl_cyc_III"/>
    <property type="match status" value="1"/>
</dbReference>
<dbReference type="FunFam" id="3.30.70.1230:FF:000001">
    <property type="entry name" value="Adenylate cyclase"/>
    <property type="match status" value="1"/>
</dbReference>
<dbReference type="FunFam" id="3.30.70.1230:FF:000002">
    <property type="entry name" value="Adenylate cyclase"/>
    <property type="match status" value="1"/>
</dbReference>
<dbReference type="Gene3D" id="3.30.70.1230">
    <property type="entry name" value="Nucleotide cyclase"/>
    <property type="match status" value="2"/>
</dbReference>
<dbReference type="InterPro" id="IPR001054">
    <property type="entry name" value="A/G_cyclase"/>
</dbReference>
<dbReference type="InterPro" id="IPR018297">
    <property type="entry name" value="A/G_cyclase_CS"/>
</dbReference>
<dbReference type="InterPro" id="IPR032628">
    <property type="entry name" value="AC_N"/>
</dbReference>
<dbReference type="InterPro" id="IPR030672">
    <property type="entry name" value="Adcy"/>
</dbReference>
<dbReference type="InterPro" id="IPR009398">
    <property type="entry name" value="Adcy_conserved_dom"/>
</dbReference>
<dbReference type="InterPro" id="IPR029787">
    <property type="entry name" value="Nucleotide_cyclase"/>
</dbReference>
<dbReference type="PANTHER" id="PTHR45627">
    <property type="entry name" value="ADENYLATE CYCLASE TYPE 1"/>
    <property type="match status" value="1"/>
</dbReference>
<dbReference type="PANTHER" id="PTHR45627:SF7">
    <property type="entry name" value="ADENYLATE CYCLASE TYPE 5"/>
    <property type="match status" value="1"/>
</dbReference>
<dbReference type="Pfam" id="PF16214">
    <property type="entry name" value="AC_N"/>
    <property type="match status" value="1"/>
</dbReference>
<dbReference type="Pfam" id="PF06327">
    <property type="entry name" value="Adcy_cons_dom"/>
    <property type="match status" value="1"/>
</dbReference>
<dbReference type="Pfam" id="PF00211">
    <property type="entry name" value="Guanylate_cyc"/>
    <property type="match status" value="2"/>
</dbReference>
<dbReference type="PIRSF" id="PIRSF039050">
    <property type="entry name" value="Ade_cyc"/>
    <property type="match status" value="1"/>
</dbReference>
<dbReference type="SMART" id="SM00044">
    <property type="entry name" value="CYCc"/>
    <property type="match status" value="2"/>
</dbReference>
<dbReference type="SUPFAM" id="SSF55073">
    <property type="entry name" value="Nucleotide cyclase"/>
    <property type="match status" value="2"/>
</dbReference>
<dbReference type="PROSITE" id="PS00452">
    <property type="entry name" value="GUANYLATE_CYCLASE_1"/>
    <property type="match status" value="2"/>
</dbReference>
<dbReference type="PROSITE" id="PS50125">
    <property type="entry name" value="GUANYLATE_CYCLASE_2"/>
    <property type="match status" value="2"/>
</dbReference>
<organism>
    <name type="scientific">Mus musculus</name>
    <name type="common">Mouse</name>
    <dbReference type="NCBI Taxonomy" id="10090"/>
    <lineage>
        <taxon>Eukaryota</taxon>
        <taxon>Metazoa</taxon>
        <taxon>Chordata</taxon>
        <taxon>Craniata</taxon>
        <taxon>Vertebrata</taxon>
        <taxon>Euteleostomi</taxon>
        <taxon>Mammalia</taxon>
        <taxon>Eutheria</taxon>
        <taxon>Euarchontoglires</taxon>
        <taxon>Glires</taxon>
        <taxon>Rodentia</taxon>
        <taxon>Myomorpha</taxon>
        <taxon>Muroidea</taxon>
        <taxon>Muridae</taxon>
        <taxon>Murinae</taxon>
        <taxon>Mus</taxon>
        <taxon>Mus</taxon>
    </lineage>
</organism>
<accession>P84309</accession>
<accession>Q3TU67</accession>
<accession>Q3UH09</accession>
<accession>Q5BL06</accession>
<name>ADCY5_MOUSE</name>
<comment type="function">
    <text evidence="3">Catalyzes the formation of the signaling molecule cAMP in response to G-protein signaling. Mediates signaling downstream of ADRB1. Regulates the increase of free cytosolic Ca(2+) in response to increased blood glucose levels and contributes to the regulation of Ca(2+)-dependent insulin secretion.</text>
</comment>
<comment type="catalytic activity">
    <reaction evidence="3">
        <text>ATP = 3',5'-cyclic AMP + diphosphate</text>
        <dbReference type="Rhea" id="RHEA:15389"/>
        <dbReference type="ChEBI" id="CHEBI:30616"/>
        <dbReference type="ChEBI" id="CHEBI:33019"/>
        <dbReference type="ChEBI" id="CHEBI:58165"/>
        <dbReference type="EC" id="4.6.1.1"/>
    </reaction>
</comment>
<comment type="cofactor">
    <cofactor evidence="5">
        <name>Mg(2+)</name>
        <dbReference type="ChEBI" id="CHEBI:18420"/>
    </cofactor>
    <cofactor evidence="5">
        <name>Mn(2+)</name>
        <dbReference type="ChEBI" id="CHEBI:29035"/>
    </cofactor>
    <text evidence="5">Binds 2 magnesium ions per subunit. Is also active with manganese (in vitro).</text>
</comment>
<comment type="activity regulation">
    <text evidence="3 5">Activated by G(s) G alpha protein GNAS (By similarity). Inhibited by G(i) G alpha protein GNAI1 (By similarity). Activity is further increased by interaction with the G-protein beta and gamma subunit complex formed by GNB1 and GNG2 (By similarity). Activated by forskolin (By similarity). Is not activated by calmodulin. Inhibited by adenosine and ATP analogs (By similarity). Inhibited by calcium ions, already at micromolar concentrations (By similarity). Phosphorylation by RAF1 results in its activation (By similarity).</text>
</comment>
<comment type="subunit">
    <text evidence="3 11">Interacts with GNAS, GNB1 and GNG2 (By similarity). Part of a complex containing AKAP5, ADCY6, PDE4C and PKD2 (PubMed:21670265). Interacts with RAF1 (By similarity).</text>
</comment>
<comment type="subcellular location">
    <subcellularLocation>
        <location evidence="5">Cell membrane</location>
        <topology evidence="5">Multi-pass membrane protein</topology>
    </subcellularLocation>
    <subcellularLocation>
        <location evidence="11">Cell projection</location>
        <location evidence="11">Cilium</location>
    </subcellularLocation>
</comment>
<comment type="alternative products">
    <event type="alternative splicing"/>
    <isoform>
        <id>P84309-1</id>
        <name>1</name>
        <sequence type="displayed"/>
    </isoform>
    <isoform>
        <id>P84309-2</id>
        <name>2</name>
        <sequence type="described" ref="VSP_022224"/>
    </isoform>
</comment>
<comment type="domain">
    <text evidence="5">The protein contains two modules with six transmembrane helices each; both are required for catalytic activity. Isolated N-terminal or C-terminal guanylate cyclase domains have no catalytic activity, but when they are brought together, enzyme activity is restored. The active site is at the interface of the two domains. Both contribute substrate-binding residues, but the catalytic metal ions are bound exclusively via the N-terminal guanylate cyclase domain.</text>
</comment>
<comment type="PTM">
    <text evidence="1">Phosphorylated by RAF1.</text>
</comment>
<comment type="similarity">
    <text evidence="8">Belongs to the adenylyl cyclase class-4/guanylyl cyclase family.</text>
</comment>
<reference key="1">
    <citation type="journal article" date="2005" name="Science">
        <title>The transcriptional landscape of the mammalian genome.</title>
        <authorList>
            <person name="Carninci P."/>
            <person name="Kasukawa T."/>
            <person name="Katayama S."/>
            <person name="Gough J."/>
            <person name="Frith M.C."/>
            <person name="Maeda N."/>
            <person name="Oyama R."/>
            <person name="Ravasi T."/>
            <person name="Lenhard B."/>
            <person name="Wells C."/>
            <person name="Kodzius R."/>
            <person name="Shimokawa K."/>
            <person name="Bajic V.B."/>
            <person name="Brenner S.E."/>
            <person name="Batalov S."/>
            <person name="Forrest A.R."/>
            <person name="Zavolan M."/>
            <person name="Davis M.J."/>
            <person name="Wilming L.G."/>
            <person name="Aidinis V."/>
            <person name="Allen J.E."/>
            <person name="Ambesi-Impiombato A."/>
            <person name="Apweiler R."/>
            <person name="Aturaliya R.N."/>
            <person name="Bailey T.L."/>
            <person name="Bansal M."/>
            <person name="Baxter L."/>
            <person name="Beisel K.W."/>
            <person name="Bersano T."/>
            <person name="Bono H."/>
            <person name="Chalk A.M."/>
            <person name="Chiu K.P."/>
            <person name="Choudhary V."/>
            <person name="Christoffels A."/>
            <person name="Clutterbuck D.R."/>
            <person name="Crowe M.L."/>
            <person name="Dalla E."/>
            <person name="Dalrymple B.P."/>
            <person name="de Bono B."/>
            <person name="Della Gatta G."/>
            <person name="di Bernardo D."/>
            <person name="Down T."/>
            <person name="Engstrom P."/>
            <person name="Fagiolini M."/>
            <person name="Faulkner G."/>
            <person name="Fletcher C.F."/>
            <person name="Fukushima T."/>
            <person name="Furuno M."/>
            <person name="Futaki S."/>
            <person name="Gariboldi M."/>
            <person name="Georgii-Hemming P."/>
            <person name="Gingeras T.R."/>
            <person name="Gojobori T."/>
            <person name="Green R.E."/>
            <person name="Gustincich S."/>
            <person name="Harbers M."/>
            <person name="Hayashi Y."/>
            <person name="Hensch T.K."/>
            <person name="Hirokawa N."/>
            <person name="Hill D."/>
            <person name="Huminiecki L."/>
            <person name="Iacono M."/>
            <person name="Ikeo K."/>
            <person name="Iwama A."/>
            <person name="Ishikawa T."/>
            <person name="Jakt M."/>
            <person name="Kanapin A."/>
            <person name="Katoh M."/>
            <person name="Kawasawa Y."/>
            <person name="Kelso J."/>
            <person name="Kitamura H."/>
            <person name="Kitano H."/>
            <person name="Kollias G."/>
            <person name="Krishnan S.P."/>
            <person name="Kruger A."/>
            <person name="Kummerfeld S.K."/>
            <person name="Kurochkin I.V."/>
            <person name="Lareau L.F."/>
            <person name="Lazarevic D."/>
            <person name="Lipovich L."/>
            <person name="Liu J."/>
            <person name="Liuni S."/>
            <person name="McWilliam S."/>
            <person name="Madan Babu M."/>
            <person name="Madera M."/>
            <person name="Marchionni L."/>
            <person name="Matsuda H."/>
            <person name="Matsuzawa S."/>
            <person name="Miki H."/>
            <person name="Mignone F."/>
            <person name="Miyake S."/>
            <person name="Morris K."/>
            <person name="Mottagui-Tabar S."/>
            <person name="Mulder N."/>
            <person name="Nakano N."/>
            <person name="Nakauchi H."/>
            <person name="Ng P."/>
            <person name="Nilsson R."/>
            <person name="Nishiguchi S."/>
            <person name="Nishikawa S."/>
            <person name="Nori F."/>
            <person name="Ohara O."/>
            <person name="Okazaki Y."/>
            <person name="Orlando V."/>
            <person name="Pang K.C."/>
            <person name="Pavan W.J."/>
            <person name="Pavesi G."/>
            <person name="Pesole G."/>
            <person name="Petrovsky N."/>
            <person name="Piazza S."/>
            <person name="Reed J."/>
            <person name="Reid J.F."/>
            <person name="Ring B.Z."/>
            <person name="Ringwald M."/>
            <person name="Rost B."/>
            <person name="Ruan Y."/>
            <person name="Salzberg S.L."/>
            <person name="Sandelin A."/>
            <person name="Schneider C."/>
            <person name="Schoenbach C."/>
            <person name="Sekiguchi K."/>
            <person name="Semple C.A."/>
            <person name="Seno S."/>
            <person name="Sessa L."/>
            <person name="Sheng Y."/>
            <person name="Shibata Y."/>
            <person name="Shimada H."/>
            <person name="Shimada K."/>
            <person name="Silva D."/>
            <person name="Sinclair B."/>
            <person name="Sperling S."/>
            <person name="Stupka E."/>
            <person name="Sugiura K."/>
            <person name="Sultana R."/>
            <person name="Takenaka Y."/>
            <person name="Taki K."/>
            <person name="Tammoja K."/>
            <person name="Tan S.L."/>
            <person name="Tang S."/>
            <person name="Taylor M.S."/>
            <person name="Tegner J."/>
            <person name="Teichmann S.A."/>
            <person name="Ueda H.R."/>
            <person name="van Nimwegen E."/>
            <person name="Verardo R."/>
            <person name="Wei C.L."/>
            <person name="Yagi K."/>
            <person name="Yamanishi H."/>
            <person name="Zabarovsky E."/>
            <person name="Zhu S."/>
            <person name="Zimmer A."/>
            <person name="Hide W."/>
            <person name="Bult C."/>
            <person name="Grimmond S.M."/>
            <person name="Teasdale R.D."/>
            <person name="Liu E.T."/>
            <person name="Brusic V."/>
            <person name="Quackenbush J."/>
            <person name="Wahlestedt C."/>
            <person name="Mattick J.S."/>
            <person name="Hume D.A."/>
            <person name="Kai C."/>
            <person name="Sasaki D."/>
            <person name="Tomaru Y."/>
            <person name="Fukuda S."/>
            <person name="Kanamori-Katayama M."/>
            <person name="Suzuki M."/>
            <person name="Aoki J."/>
            <person name="Arakawa T."/>
            <person name="Iida J."/>
            <person name="Imamura K."/>
            <person name="Itoh M."/>
            <person name="Kato T."/>
            <person name="Kawaji H."/>
            <person name="Kawagashira N."/>
            <person name="Kawashima T."/>
            <person name="Kojima M."/>
            <person name="Kondo S."/>
            <person name="Konno H."/>
            <person name="Nakano K."/>
            <person name="Ninomiya N."/>
            <person name="Nishio T."/>
            <person name="Okada M."/>
            <person name="Plessy C."/>
            <person name="Shibata K."/>
            <person name="Shiraki T."/>
            <person name="Suzuki S."/>
            <person name="Tagami M."/>
            <person name="Waki K."/>
            <person name="Watahiki A."/>
            <person name="Okamura-Oho Y."/>
            <person name="Suzuki H."/>
            <person name="Kawai J."/>
            <person name="Hayashizaki Y."/>
        </authorList>
    </citation>
    <scope>NUCLEOTIDE SEQUENCE [LARGE SCALE MRNA] (ISOFORM 1)</scope>
    <source>
        <strain>C57BL/6J</strain>
        <tissue>Head</tissue>
    </source>
</reference>
<reference evidence="13" key="2">
    <citation type="journal article" date="2004" name="Genome Res.">
        <title>The status, quality, and expansion of the NIH full-length cDNA project: the Mammalian Gene Collection (MGC).</title>
        <authorList>
            <consortium name="The MGC Project Team"/>
        </authorList>
    </citation>
    <scope>NUCLEOTIDE SEQUENCE [LARGE SCALE MRNA] (ISOFORMS 1 AND 2)</scope>
    <source>
        <strain evidence="10">C57BL/6J</strain>
        <tissue>Brain</tissue>
        <tissue evidence="10">Retina</tissue>
    </source>
</reference>
<reference key="3">
    <citation type="journal article" date="2010" name="Cell">
        <title>A tissue-specific atlas of mouse protein phosphorylation and expression.</title>
        <authorList>
            <person name="Huttlin E.L."/>
            <person name="Jedrychowski M.P."/>
            <person name="Elias J.E."/>
            <person name="Goswami T."/>
            <person name="Rad R."/>
            <person name="Beausoleil S.A."/>
            <person name="Villen J."/>
            <person name="Haas W."/>
            <person name="Sowa M.E."/>
            <person name="Gygi S.P."/>
        </authorList>
    </citation>
    <scope>PHOSPHORYLATION [LARGE SCALE ANALYSIS] AT SER-97 AND SER-156</scope>
    <scope>IDENTIFICATION BY MASS SPECTROMETRY [LARGE SCALE ANALYSIS]</scope>
    <source>
        <tissue>Brain</tissue>
        <tissue>Kidney</tissue>
    </source>
</reference>
<reference key="4">
    <citation type="journal article" date="2011" name="Proc. Natl. Acad. Sci. U.S.A.">
        <title>Polycystin-2 and phosphodiesterase 4C are components of a ciliary A-kinase anchoring protein complex that is disrupted in cystic kidney diseases.</title>
        <authorList>
            <person name="Choi Y.H."/>
            <person name="Suzuki A."/>
            <person name="Hajarnis S."/>
            <person name="Ma Z."/>
            <person name="Chapin H.C."/>
            <person name="Caplan M.J."/>
            <person name="Pontoglio M."/>
            <person name="Somlo S."/>
            <person name="Igarashi P."/>
        </authorList>
    </citation>
    <scope>SUBCELLULAR LOCATION</scope>
    <scope>INTERACTION WITH AKAP5; ADCY6; PDE4C AND PKD2</scope>
</reference>
<reference key="5">
    <citation type="journal article" date="2014" name="Mol. Cell. Proteomics">
        <title>Immunoaffinity enrichment and mass spectrometry analysis of protein methylation.</title>
        <authorList>
            <person name="Guo A."/>
            <person name="Gu H."/>
            <person name="Zhou J."/>
            <person name="Mulhern D."/>
            <person name="Wang Y."/>
            <person name="Lee K.A."/>
            <person name="Yang V."/>
            <person name="Aguiar M."/>
            <person name="Kornhauser J."/>
            <person name="Jia X."/>
            <person name="Ren J."/>
            <person name="Beausoleil S.A."/>
            <person name="Silva J.C."/>
            <person name="Vemulapalli V."/>
            <person name="Bedford M.T."/>
            <person name="Comb M.J."/>
        </authorList>
    </citation>
    <scope>METHYLATION [LARGE SCALE ANALYSIS] AT ARG-23</scope>
    <scope>IDENTIFICATION BY MASS SPECTROMETRY [LARGE SCALE ANALYSIS]</scope>
    <source>
        <tissue>Brain</tissue>
    </source>
</reference>
<sequence>MSGSKSVSPPGYAAQTAASPAPRGGPEHRAAWGEADSRANGYPHAPGGSTRGSTKRSGGAVTPQQQQRLASRWRGGDDDEDPPLSGDDPLAGGFGFSFRSKSAWQERGGDDGGRGSRRQRRGAAGGGSTRAPPAGGSGSSAAAAAAAGGTEVRPRSVELGLEERRGKGRAAEELEPGTGIVEDGDGSEDGGSSVASGSGTGAVLSLGACCLALLQIFRSKKFPSDKLERLYQRYFFRLNQSSLTMLMAVLVLVCLVMLAFHAARPPLQIAYLAVLAAAVGVILIMAVLCNRAAFHQDHMGLACYALIAVVLAVQVVGLLLPQPRSASEGIWWTVFFIYTIYTLLPVRMRAAVLSGVLLSALHLAISLHTNSQDQFLLKQLVSNVLIFSCTNIVGVCTHYPAEVSQRQAFQETRECIQARLHSQRENQQQERLLLSVLPRHVAMEMKADINAKQEDMMFHKIYIQKHDNVSILFADIEGFTSLASQCTAQELVMTLNELFARFDKLAAENHCLRIKILGDCYYCVSGLPEARADHAHCCVEMGMDMIEAISLVREVTGVNVNMRVGIHSGRVHCGVLGLRKWQFDVWSNDVTLANHMEAGGKAGRIHITKATLNYLNGDYEVEPGCGGDRNAYLKEHSIETFLILSCTQKRKEEKAMIAKMNRQRTNSIGHNPPHWGAERPFYNHLGGNQVSKEMKRMGFEDPKDKNAQESANPEDEVDEFLGRAIDARSIDRLRSEHVRKFLLTFREPDLEKKYSKQVDDRFGAYVACASLVFLFICFVQITIVPHSLFMLSFYLSCFLLLALVVFVSVIYACVKLFPTPLQTLSRKIVRSKKNSTLVGVFTITLVFLSAFVNMFMCNSKNLVGCLAEEHNITVNQVNACHVMESAFNYSLGDEQGFCGSPQPNCNFPEYFTYSVLLSLLACSVFLQISCIGKLVLMLAIEFIYVLIVEVPGVTLFDNADLLVTANAIDFSNNGTSQCPEHATKVALKVVTPIIISVFVLALYLHAQQVESTARLDFLWKLQATEEKEEMEELQAYNRRLLHNILPKDVAAHFLARERRNDELYYQSCECVAVMFASIANFSEFYVELEANNEGVECLRLLNEIIADFDEIISEDRFRQLEKIKTIGSTYMAASGLNDSTYDKAGKTHIKAIADFAMKLMDQMKYINEHSFNNFQMKIGLNIGPVVAGVIGARKPQYDIWGNTVNVASRMDSTGVPDRIQVTTDMYQVLAANTYQLECRGVVKVKGKGEMMTYFLNGGPPLS</sequence>
<gene>
    <name evidence="14" type="primary">Adcy5</name>
</gene>
<protein>
    <recommendedName>
        <fullName>Adenylate cyclase type 5</fullName>
        <ecNumber evidence="3">4.6.1.1</ecNumber>
    </recommendedName>
    <alternativeName>
        <fullName>ATP pyrophosphate-lyase 5</fullName>
    </alternativeName>
    <alternativeName>
        <fullName>Adenylate cyclase type V</fullName>
    </alternativeName>
    <alternativeName>
        <fullName>Adenylyl cyclase 5</fullName>
    </alternativeName>
</protein>
<evidence type="ECO:0000250" key="1"/>
<evidence type="ECO:0000250" key="2">
    <source>
        <dbReference type="UniProtKB" id="O43306"/>
    </source>
</evidence>
<evidence type="ECO:0000250" key="3">
    <source>
        <dbReference type="UniProtKB" id="O95622"/>
    </source>
</evidence>
<evidence type="ECO:0000250" key="4">
    <source>
        <dbReference type="UniProtKB" id="P26769"/>
    </source>
</evidence>
<evidence type="ECO:0000250" key="5">
    <source>
        <dbReference type="UniProtKB" id="P30803"/>
    </source>
</evidence>
<evidence type="ECO:0000250" key="6">
    <source>
        <dbReference type="UniProtKB" id="Q03343"/>
    </source>
</evidence>
<evidence type="ECO:0000255" key="7"/>
<evidence type="ECO:0000255" key="8">
    <source>
        <dbReference type="PROSITE-ProRule" id="PRU00099"/>
    </source>
</evidence>
<evidence type="ECO:0000256" key="9">
    <source>
        <dbReference type="SAM" id="MobiDB-lite"/>
    </source>
</evidence>
<evidence type="ECO:0000269" key="10">
    <source>
    </source>
</evidence>
<evidence type="ECO:0000269" key="11">
    <source>
    </source>
</evidence>
<evidence type="ECO:0000303" key="12">
    <source>
    </source>
</evidence>
<evidence type="ECO:0000305" key="13"/>
<evidence type="ECO:0000312" key="14">
    <source>
        <dbReference type="MGI" id="MGI:99673"/>
    </source>
</evidence>
<evidence type="ECO:0007744" key="15">
    <source>
    </source>
</evidence>
<evidence type="ECO:0007744" key="16">
    <source>
    </source>
</evidence>